<gene>
    <name evidence="1" type="primary">ldh</name>
    <name type="ordered locus">MGAS10270_Spy0987</name>
</gene>
<reference key="1">
    <citation type="journal article" date="2006" name="Proc. Natl. Acad. Sci. U.S.A.">
        <title>Molecular genetic anatomy of inter- and intraserotype variation in the human bacterial pathogen group A Streptococcus.</title>
        <authorList>
            <person name="Beres S.B."/>
            <person name="Richter E.W."/>
            <person name="Nagiec M.J."/>
            <person name="Sumby P."/>
            <person name="Porcella S.F."/>
            <person name="DeLeo F.R."/>
            <person name="Musser J.M."/>
        </authorList>
    </citation>
    <scope>NUCLEOTIDE SEQUENCE [LARGE SCALE GENOMIC DNA]</scope>
    <source>
        <strain>MGAS10270</strain>
    </source>
</reference>
<comment type="function">
    <text evidence="1">Catalyzes the conversion of lactate to pyruvate.</text>
</comment>
<comment type="catalytic activity">
    <reaction evidence="1">
        <text>(S)-lactate + NAD(+) = pyruvate + NADH + H(+)</text>
        <dbReference type="Rhea" id="RHEA:23444"/>
        <dbReference type="ChEBI" id="CHEBI:15361"/>
        <dbReference type="ChEBI" id="CHEBI:15378"/>
        <dbReference type="ChEBI" id="CHEBI:16651"/>
        <dbReference type="ChEBI" id="CHEBI:57540"/>
        <dbReference type="ChEBI" id="CHEBI:57945"/>
        <dbReference type="EC" id="1.1.1.27"/>
    </reaction>
</comment>
<comment type="activity regulation">
    <text evidence="1">Allosterically activated by fructose 1,6-bisphosphate (FBP).</text>
</comment>
<comment type="pathway">
    <text evidence="1">Fermentation; pyruvate fermentation to lactate; (S)-lactate from pyruvate: step 1/1.</text>
</comment>
<comment type="subunit">
    <text evidence="1">Homotetramer.</text>
</comment>
<comment type="subcellular location">
    <subcellularLocation>
        <location evidence="1">Cytoplasm</location>
    </subcellularLocation>
</comment>
<comment type="similarity">
    <text evidence="1">Belongs to the LDH/MDH superfamily. LDH family.</text>
</comment>
<protein>
    <recommendedName>
        <fullName evidence="1">L-lactate dehydrogenase</fullName>
        <shortName evidence="1">L-LDH</shortName>
        <ecNumber evidence="1">1.1.1.27</ecNumber>
    </recommendedName>
</protein>
<evidence type="ECO:0000255" key="1">
    <source>
        <dbReference type="HAMAP-Rule" id="MF_00488"/>
    </source>
</evidence>
<keyword id="KW-0021">Allosteric enzyme</keyword>
<keyword id="KW-0963">Cytoplasm</keyword>
<keyword id="KW-0520">NAD</keyword>
<keyword id="KW-0560">Oxidoreductase</keyword>
<keyword id="KW-0597">Phosphoprotein</keyword>
<organism>
    <name type="scientific">Streptococcus pyogenes serotype M2 (strain MGAS10270)</name>
    <dbReference type="NCBI Taxonomy" id="370552"/>
    <lineage>
        <taxon>Bacteria</taxon>
        <taxon>Bacillati</taxon>
        <taxon>Bacillota</taxon>
        <taxon>Bacilli</taxon>
        <taxon>Lactobacillales</taxon>
        <taxon>Streptococcaceae</taxon>
        <taxon>Streptococcus</taxon>
    </lineage>
</organism>
<sequence length="327" mass="35272">MTATKQHKKVILVGDGAVGSSYAFALVTQNIAQELGIIDIFKEKTQGDAEDLSHALAFTSPKKIYAADYSDCHDADLVVLTAGAPQKPGETRLDLVEKNLRINKEVVTQIVASGFKGIFLVAANPVDVLTYSTWKFSGFPKERVIGSGTSLDSARFRQALAAKIGVDARSVHAYIMGEHGDSEFAVWSHANVAGVGLYDWLQANRDIDEQGLVDLFISVRDAAYSIINKKGATFYGIAVALARITKAILDDENAVLPLSVFQEGQYEGVEDCYIGQPAIVGAYGIVRPVNIPLNDAELQKMQASANQLKAIIDEAFAKEEFASAAKN</sequence>
<proteinExistence type="inferred from homology"/>
<dbReference type="EC" id="1.1.1.27" evidence="1"/>
<dbReference type="EMBL" id="CP000260">
    <property type="protein sequence ID" value="ABF34052.1"/>
    <property type="molecule type" value="Genomic_DNA"/>
</dbReference>
<dbReference type="RefSeq" id="WP_002984645.1">
    <property type="nucleotide sequence ID" value="NZ_CVUH01000005.1"/>
</dbReference>
<dbReference type="SMR" id="Q1JGU2"/>
<dbReference type="KEGG" id="sph:MGAS10270_Spy0987"/>
<dbReference type="HOGENOM" id="CLU_045401_1_1_9"/>
<dbReference type="UniPathway" id="UPA00554">
    <property type="reaction ID" value="UER00611"/>
</dbReference>
<dbReference type="Proteomes" id="UP000002436">
    <property type="component" value="Chromosome"/>
</dbReference>
<dbReference type="GO" id="GO:0005737">
    <property type="term" value="C:cytoplasm"/>
    <property type="evidence" value="ECO:0007669"/>
    <property type="project" value="UniProtKB-SubCell"/>
</dbReference>
<dbReference type="GO" id="GO:0004459">
    <property type="term" value="F:L-lactate dehydrogenase activity"/>
    <property type="evidence" value="ECO:0007669"/>
    <property type="project" value="UniProtKB-UniRule"/>
</dbReference>
<dbReference type="GO" id="GO:0006096">
    <property type="term" value="P:glycolytic process"/>
    <property type="evidence" value="ECO:0007669"/>
    <property type="project" value="UniProtKB-UniRule"/>
</dbReference>
<dbReference type="GO" id="GO:0006089">
    <property type="term" value="P:lactate metabolic process"/>
    <property type="evidence" value="ECO:0007669"/>
    <property type="project" value="TreeGrafter"/>
</dbReference>
<dbReference type="CDD" id="cd05291">
    <property type="entry name" value="HicDH_like"/>
    <property type="match status" value="1"/>
</dbReference>
<dbReference type="FunFam" id="3.40.50.720:FF:000018">
    <property type="entry name" value="Malate dehydrogenase"/>
    <property type="match status" value="1"/>
</dbReference>
<dbReference type="Gene3D" id="3.90.110.10">
    <property type="entry name" value="Lactate dehydrogenase/glycoside hydrolase, family 4, C-terminal"/>
    <property type="match status" value="1"/>
</dbReference>
<dbReference type="Gene3D" id="3.40.50.720">
    <property type="entry name" value="NAD(P)-binding Rossmann-like Domain"/>
    <property type="match status" value="1"/>
</dbReference>
<dbReference type="HAMAP" id="MF_00488">
    <property type="entry name" value="Lactate_dehydrog"/>
    <property type="match status" value="1"/>
</dbReference>
<dbReference type="InterPro" id="IPR001557">
    <property type="entry name" value="L-lactate/malate_DH"/>
</dbReference>
<dbReference type="InterPro" id="IPR011304">
    <property type="entry name" value="L-lactate_DH"/>
</dbReference>
<dbReference type="InterPro" id="IPR018177">
    <property type="entry name" value="L-lactate_DH_AS"/>
</dbReference>
<dbReference type="InterPro" id="IPR022383">
    <property type="entry name" value="Lactate/malate_DH_C"/>
</dbReference>
<dbReference type="InterPro" id="IPR001236">
    <property type="entry name" value="Lactate/malate_DH_N"/>
</dbReference>
<dbReference type="InterPro" id="IPR015955">
    <property type="entry name" value="Lactate_DH/Glyco_Ohase_4_C"/>
</dbReference>
<dbReference type="InterPro" id="IPR036291">
    <property type="entry name" value="NAD(P)-bd_dom_sf"/>
</dbReference>
<dbReference type="NCBIfam" id="TIGR01771">
    <property type="entry name" value="L-LDH-NAD"/>
    <property type="match status" value="1"/>
</dbReference>
<dbReference type="NCBIfam" id="NF000824">
    <property type="entry name" value="PRK00066.1"/>
    <property type="match status" value="1"/>
</dbReference>
<dbReference type="PANTHER" id="PTHR43128">
    <property type="entry name" value="L-2-HYDROXYCARBOXYLATE DEHYDROGENASE (NAD(P)(+))"/>
    <property type="match status" value="1"/>
</dbReference>
<dbReference type="PANTHER" id="PTHR43128:SF16">
    <property type="entry name" value="L-LACTATE DEHYDROGENASE"/>
    <property type="match status" value="1"/>
</dbReference>
<dbReference type="Pfam" id="PF02866">
    <property type="entry name" value="Ldh_1_C"/>
    <property type="match status" value="1"/>
</dbReference>
<dbReference type="Pfam" id="PF00056">
    <property type="entry name" value="Ldh_1_N"/>
    <property type="match status" value="1"/>
</dbReference>
<dbReference type="PIRSF" id="PIRSF000102">
    <property type="entry name" value="Lac_mal_DH"/>
    <property type="match status" value="1"/>
</dbReference>
<dbReference type="PRINTS" id="PR00086">
    <property type="entry name" value="LLDHDRGNASE"/>
</dbReference>
<dbReference type="SUPFAM" id="SSF56327">
    <property type="entry name" value="LDH C-terminal domain-like"/>
    <property type="match status" value="1"/>
</dbReference>
<dbReference type="SUPFAM" id="SSF51735">
    <property type="entry name" value="NAD(P)-binding Rossmann-fold domains"/>
    <property type="match status" value="1"/>
</dbReference>
<dbReference type="PROSITE" id="PS00064">
    <property type="entry name" value="L_LDH"/>
    <property type="match status" value="1"/>
</dbReference>
<name>LDH_STRPD</name>
<feature type="chain" id="PRO_1000026511" description="L-lactate dehydrogenase">
    <location>
        <begin position="1"/>
        <end position="327"/>
    </location>
</feature>
<feature type="active site" description="Proton acceptor" evidence="1">
    <location>
        <position position="179"/>
    </location>
</feature>
<feature type="binding site" evidence="1">
    <location>
        <position position="18"/>
    </location>
    <ligand>
        <name>NAD(+)</name>
        <dbReference type="ChEBI" id="CHEBI:57540"/>
    </ligand>
</feature>
<feature type="binding site" evidence="1">
    <location>
        <position position="39"/>
    </location>
    <ligand>
        <name>NAD(+)</name>
        <dbReference type="ChEBI" id="CHEBI:57540"/>
    </ligand>
</feature>
<feature type="binding site" evidence="1">
    <location>
        <position position="44"/>
    </location>
    <ligand>
        <name>NAD(+)</name>
        <dbReference type="ChEBI" id="CHEBI:57540"/>
    </ligand>
</feature>
<feature type="binding site" evidence="1">
    <location>
        <position position="69"/>
    </location>
    <ligand>
        <name>NAD(+)</name>
        <dbReference type="ChEBI" id="CHEBI:57540"/>
    </ligand>
</feature>
<feature type="binding site" evidence="1">
    <location>
        <begin position="83"/>
        <end position="84"/>
    </location>
    <ligand>
        <name>NAD(+)</name>
        <dbReference type="ChEBI" id="CHEBI:57540"/>
    </ligand>
</feature>
<feature type="binding site" evidence="1">
    <location>
        <position position="86"/>
    </location>
    <ligand>
        <name>substrate</name>
    </ligand>
</feature>
<feature type="binding site" evidence="1">
    <location>
        <position position="92"/>
    </location>
    <ligand>
        <name>substrate</name>
    </ligand>
</feature>
<feature type="binding site" evidence="1">
    <location>
        <begin position="122"/>
        <end position="124"/>
    </location>
    <ligand>
        <name>NAD(+)</name>
        <dbReference type="ChEBI" id="CHEBI:57540"/>
    </ligand>
</feature>
<feature type="binding site" evidence="1">
    <location>
        <begin position="124"/>
        <end position="127"/>
    </location>
    <ligand>
        <name>substrate</name>
    </ligand>
</feature>
<feature type="binding site" evidence="1">
    <location>
        <position position="147"/>
    </location>
    <ligand>
        <name>NAD(+)</name>
        <dbReference type="ChEBI" id="CHEBI:57540"/>
    </ligand>
</feature>
<feature type="binding site" evidence="1">
    <location>
        <begin position="152"/>
        <end position="155"/>
    </location>
    <ligand>
        <name>substrate</name>
    </ligand>
</feature>
<feature type="binding site" evidence="1">
    <location>
        <position position="157"/>
    </location>
    <ligand>
        <name>beta-D-fructose 1,6-bisphosphate</name>
        <dbReference type="ChEBI" id="CHEBI:32966"/>
        <note>allosteric activator</note>
    </ligand>
</feature>
<feature type="binding site" evidence="1">
    <location>
        <position position="172"/>
    </location>
    <ligand>
        <name>beta-D-fructose 1,6-bisphosphate</name>
        <dbReference type="ChEBI" id="CHEBI:32966"/>
        <note>allosteric activator</note>
    </ligand>
</feature>
<feature type="binding site" evidence="1">
    <location>
        <position position="233"/>
    </location>
    <ligand>
        <name>substrate</name>
    </ligand>
</feature>
<feature type="modified residue" description="Phosphotyrosine" evidence="1">
    <location>
        <position position="224"/>
    </location>
</feature>
<accession>Q1JGU2</accession>